<comment type="function">
    <text evidence="1">Catalyzes the attachment of tyrosine to tRNA(Tyr) in a two-step reaction: tyrosine is first activated by ATP to form Tyr-AMP and then transferred to the acceptor end of tRNA(Tyr).</text>
</comment>
<comment type="catalytic activity">
    <reaction evidence="1">
        <text>tRNA(Tyr) + L-tyrosine + ATP = L-tyrosyl-tRNA(Tyr) + AMP + diphosphate + H(+)</text>
        <dbReference type="Rhea" id="RHEA:10220"/>
        <dbReference type="Rhea" id="RHEA-COMP:9706"/>
        <dbReference type="Rhea" id="RHEA-COMP:9707"/>
        <dbReference type="ChEBI" id="CHEBI:15378"/>
        <dbReference type="ChEBI" id="CHEBI:30616"/>
        <dbReference type="ChEBI" id="CHEBI:33019"/>
        <dbReference type="ChEBI" id="CHEBI:58315"/>
        <dbReference type="ChEBI" id="CHEBI:78442"/>
        <dbReference type="ChEBI" id="CHEBI:78536"/>
        <dbReference type="ChEBI" id="CHEBI:456215"/>
        <dbReference type="EC" id="6.1.1.1"/>
    </reaction>
</comment>
<comment type="subunit">
    <text evidence="1">Homodimer.</text>
</comment>
<comment type="subcellular location">
    <subcellularLocation>
        <location evidence="1">Cytoplasm</location>
    </subcellularLocation>
</comment>
<comment type="similarity">
    <text evidence="1">Belongs to the class-I aminoacyl-tRNA synthetase family. TyrS type 1 subfamily.</text>
</comment>
<feature type="chain" id="PRO_0000234812" description="Tyrosine--tRNA ligase 1">
    <location>
        <begin position="1"/>
        <end position="422"/>
    </location>
</feature>
<feature type="domain" description="S4 RNA-binding" evidence="1">
    <location>
        <begin position="355"/>
        <end position="419"/>
    </location>
</feature>
<feature type="short sequence motif" description="'HIGH' region">
    <location>
        <begin position="41"/>
        <end position="50"/>
    </location>
</feature>
<feature type="short sequence motif" description="'KMSKS' region">
    <location>
        <begin position="233"/>
        <end position="237"/>
    </location>
</feature>
<feature type="binding site" evidence="1">
    <location>
        <position position="36"/>
    </location>
    <ligand>
        <name>L-tyrosine</name>
        <dbReference type="ChEBI" id="CHEBI:58315"/>
    </ligand>
</feature>
<feature type="binding site" evidence="1">
    <location>
        <position position="173"/>
    </location>
    <ligand>
        <name>L-tyrosine</name>
        <dbReference type="ChEBI" id="CHEBI:58315"/>
    </ligand>
</feature>
<feature type="binding site" evidence="1">
    <location>
        <position position="177"/>
    </location>
    <ligand>
        <name>L-tyrosine</name>
        <dbReference type="ChEBI" id="CHEBI:58315"/>
    </ligand>
</feature>
<feature type="binding site" evidence="1">
    <location>
        <position position="236"/>
    </location>
    <ligand>
        <name>ATP</name>
        <dbReference type="ChEBI" id="CHEBI:30616"/>
    </ligand>
</feature>
<dbReference type="EC" id="6.1.1.1" evidence="1"/>
<dbReference type="EMBL" id="BA000038">
    <property type="protein sequence ID" value="BAC97375.1"/>
    <property type="molecule type" value="Genomic_DNA"/>
</dbReference>
<dbReference type="SMR" id="Q7MCN7"/>
<dbReference type="STRING" id="672.VV93_v1c42630"/>
<dbReference type="KEGG" id="vvy:VVA1349"/>
<dbReference type="PATRIC" id="fig|196600.6.peg.4496"/>
<dbReference type="eggNOG" id="COG0162">
    <property type="taxonomic scope" value="Bacteria"/>
</dbReference>
<dbReference type="HOGENOM" id="CLU_024003_0_3_6"/>
<dbReference type="Proteomes" id="UP000002675">
    <property type="component" value="Chromosome II"/>
</dbReference>
<dbReference type="GO" id="GO:0005829">
    <property type="term" value="C:cytosol"/>
    <property type="evidence" value="ECO:0007669"/>
    <property type="project" value="TreeGrafter"/>
</dbReference>
<dbReference type="GO" id="GO:0005524">
    <property type="term" value="F:ATP binding"/>
    <property type="evidence" value="ECO:0007669"/>
    <property type="project" value="UniProtKB-UniRule"/>
</dbReference>
<dbReference type="GO" id="GO:0003723">
    <property type="term" value="F:RNA binding"/>
    <property type="evidence" value="ECO:0007669"/>
    <property type="project" value="UniProtKB-KW"/>
</dbReference>
<dbReference type="GO" id="GO:0004831">
    <property type="term" value="F:tyrosine-tRNA ligase activity"/>
    <property type="evidence" value="ECO:0007669"/>
    <property type="project" value="UniProtKB-UniRule"/>
</dbReference>
<dbReference type="GO" id="GO:0006437">
    <property type="term" value="P:tyrosyl-tRNA aminoacylation"/>
    <property type="evidence" value="ECO:0007669"/>
    <property type="project" value="UniProtKB-UniRule"/>
</dbReference>
<dbReference type="CDD" id="cd00165">
    <property type="entry name" value="S4"/>
    <property type="match status" value="1"/>
</dbReference>
<dbReference type="CDD" id="cd00805">
    <property type="entry name" value="TyrRS_core"/>
    <property type="match status" value="1"/>
</dbReference>
<dbReference type="FunFam" id="1.10.240.10:FF:000001">
    <property type="entry name" value="Tyrosine--tRNA ligase"/>
    <property type="match status" value="1"/>
</dbReference>
<dbReference type="FunFam" id="3.40.50.620:FF:000008">
    <property type="entry name" value="Tyrosine--tRNA ligase"/>
    <property type="match status" value="1"/>
</dbReference>
<dbReference type="Gene3D" id="3.40.50.620">
    <property type="entry name" value="HUPs"/>
    <property type="match status" value="1"/>
</dbReference>
<dbReference type="Gene3D" id="3.10.290.10">
    <property type="entry name" value="RNA-binding S4 domain"/>
    <property type="match status" value="1"/>
</dbReference>
<dbReference type="Gene3D" id="1.10.240.10">
    <property type="entry name" value="Tyrosyl-Transfer RNA Synthetase"/>
    <property type="match status" value="1"/>
</dbReference>
<dbReference type="HAMAP" id="MF_02006">
    <property type="entry name" value="Tyr_tRNA_synth_type1"/>
    <property type="match status" value="1"/>
</dbReference>
<dbReference type="InterPro" id="IPR001412">
    <property type="entry name" value="aa-tRNA-synth_I_CS"/>
</dbReference>
<dbReference type="InterPro" id="IPR002305">
    <property type="entry name" value="aa-tRNA-synth_Ic"/>
</dbReference>
<dbReference type="InterPro" id="IPR014729">
    <property type="entry name" value="Rossmann-like_a/b/a_fold"/>
</dbReference>
<dbReference type="InterPro" id="IPR036986">
    <property type="entry name" value="S4_RNA-bd_sf"/>
</dbReference>
<dbReference type="InterPro" id="IPR054608">
    <property type="entry name" value="SYY-like_C"/>
</dbReference>
<dbReference type="InterPro" id="IPR002307">
    <property type="entry name" value="Tyr-tRNA-ligase"/>
</dbReference>
<dbReference type="InterPro" id="IPR024088">
    <property type="entry name" value="Tyr-tRNA-ligase_bac-type"/>
</dbReference>
<dbReference type="InterPro" id="IPR024107">
    <property type="entry name" value="Tyr-tRNA-ligase_bac_1"/>
</dbReference>
<dbReference type="NCBIfam" id="TIGR00234">
    <property type="entry name" value="tyrS"/>
    <property type="match status" value="1"/>
</dbReference>
<dbReference type="PANTHER" id="PTHR11766:SF0">
    <property type="entry name" value="TYROSINE--TRNA LIGASE, MITOCHONDRIAL"/>
    <property type="match status" value="1"/>
</dbReference>
<dbReference type="PANTHER" id="PTHR11766">
    <property type="entry name" value="TYROSYL-TRNA SYNTHETASE"/>
    <property type="match status" value="1"/>
</dbReference>
<dbReference type="Pfam" id="PF22421">
    <property type="entry name" value="SYY_C-terminal"/>
    <property type="match status" value="1"/>
</dbReference>
<dbReference type="Pfam" id="PF00579">
    <property type="entry name" value="tRNA-synt_1b"/>
    <property type="match status" value="1"/>
</dbReference>
<dbReference type="PRINTS" id="PR01040">
    <property type="entry name" value="TRNASYNTHTYR"/>
</dbReference>
<dbReference type="SUPFAM" id="SSF55174">
    <property type="entry name" value="Alpha-L RNA-binding motif"/>
    <property type="match status" value="1"/>
</dbReference>
<dbReference type="SUPFAM" id="SSF52374">
    <property type="entry name" value="Nucleotidylyl transferase"/>
    <property type="match status" value="1"/>
</dbReference>
<dbReference type="PROSITE" id="PS00178">
    <property type="entry name" value="AA_TRNA_LIGASE_I"/>
    <property type="match status" value="1"/>
</dbReference>
<dbReference type="PROSITE" id="PS50889">
    <property type="entry name" value="S4"/>
    <property type="match status" value="1"/>
</dbReference>
<protein>
    <recommendedName>
        <fullName evidence="1">Tyrosine--tRNA ligase 1</fullName>
        <ecNumber evidence="1">6.1.1.1</ecNumber>
    </recommendedName>
    <alternativeName>
        <fullName evidence="1">Tyrosyl-tRNA synthetase 1</fullName>
        <shortName evidence="1">TyrRS 1</shortName>
    </alternativeName>
</protein>
<organism>
    <name type="scientific">Vibrio vulnificus (strain YJ016)</name>
    <dbReference type="NCBI Taxonomy" id="196600"/>
    <lineage>
        <taxon>Bacteria</taxon>
        <taxon>Pseudomonadati</taxon>
        <taxon>Pseudomonadota</taxon>
        <taxon>Gammaproteobacteria</taxon>
        <taxon>Vibrionales</taxon>
        <taxon>Vibrionaceae</taxon>
        <taxon>Vibrio</taxon>
    </lineage>
</organism>
<name>SYY1_VIBVY</name>
<gene>
    <name evidence="1" type="primary">tyrS1</name>
    <name type="ordered locus">VVA1349</name>
</gene>
<keyword id="KW-0030">Aminoacyl-tRNA synthetase</keyword>
<keyword id="KW-0067">ATP-binding</keyword>
<keyword id="KW-0963">Cytoplasm</keyword>
<keyword id="KW-0436">Ligase</keyword>
<keyword id="KW-0547">Nucleotide-binding</keyword>
<keyword id="KW-0648">Protein biosynthesis</keyword>
<keyword id="KW-0694">RNA-binding</keyword>
<sequence length="422" mass="47162">MNSQLLFDDLAQRGLIAQTTDLEQLIALFRQPQTLYCGFDPTAGSLHIGHLVPLIMLKRFQDAGHQGIALIGGATGMIGDPSFKASERSLNSAETVAAWVNALATQIQQLMTPHLTQPLVMVNNADWMQSIGVIAFFRDIGKHFSVNAMIQRESVKQRLARPDQGISFTEFSYSLLQSYDFAQLNQTHQCALQIGGNDQWGNIVSGIDLTRRLNGTTVHGLTLPLITKSDGTKFGKTEGGAIWLDAAKTSPYMFYQFWLNCDDADVYRFLRYYTFLSVEQIEQIEATDKAQVGKPSAQRILAEEMTRFVHGHAGLESAQRISQALFSGQLNQLNLAELKQLEQDGLPCRQLAHVSDVVTLLLETGLASSKRQAREWLENGAIRINGERWNEQTLAQTFALYDQYYIVQRGKKQFAMVKLAQV</sequence>
<reference key="1">
    <citation type="journal article" date="2003" name="Genome Res.">
        <title>Comparative genome analysis of Vibrio vulnificus, a marine pathogen.</title>
        <authorList>
            <person name="Chen C.-Y."/>
            <person name="Wu K.-M."/>
            <person name="Chang Y.-C."/>
            <person name="Chang C.-H."/>
            <person name="Tsai H.-C."/>
            <person name="Liao T.-L."/>
            <person name="Liu Y.-M."/>
            <person name="Chen H.-J."/>
            <person name="Shen A.B.-T."/>
            <person name="Li J.-C."/>
            <person name="Su T.-L."/>
            <person name="Shao C.-P."/>
            <person name="Lee C.-T."/>
            <person name="Hor L.-I."/>
            <person name="Tsai S.-F."/>
        </authorList>
    </citation>
    <scope>NUCLEOTIDE SEQUENCE [LARGE SCALE GENOMIC DNA]</scope>
    <source>
        <strain>YJ016</strain>
    </source>
</reference>
<evidence type="ECO:0000255" key="1">
    <source>
        <dbReference type="HAMAP-Rule" id="MF_02006"/>
    </source>
</evidence>
<accession>Q7MCN7</accession>
<proteinExistence type="inferred from homology"/>